<gene>
    <name type="primary">rcnR</name>
    <name type="ordered locus">CKO_04229</name>
</gene>
<sequence length="90" mass="10164">MSHTIRDKQKLKARASKIQGQVVALKKMLDEPHECAAVLQQIAAIRGAVNGLMREVIKGHLTEHIVHQSDEVKREDDLEVILKVLDSYIK</sequence>
<reference key="1">
    <citation type="submission" date="2007-08" db="EMBL/GenBank/DDBJ databases">
        <authorList>
            <consortium name="The Citrobacter koseri Genome Sequencing Project"/>
            <person name="McClelland M."/>
            <person name="Sanderson E.K."/>
            <person name="Porwollik S."/>
            <person name="Spieth J."/>
            <person name="Clifton W.S."/>
            <person name="Latreille P."/>
            <person name="Courtney L."/>
            <person name="Wang C."/>
            <person name="Pepin K."/>
            <person name="Bhonagiri V."/>
            <person name="Nash W."/>
            <person name="Johnson M."/>
            <person name="Thiruvilangam P."/>
            <person name="Wilson R."/>
        </authorList>
    </citation>
    <scope>NUCLEOTIDE SEQUENCE [LARGE SCALE GENOMIC DNA]</scope>
    <source>
        <strain>ATCC BAA-895 / CDC 4225-83 / SGSC4696</strain>
    </source>
</reference>
<accession>A8AP75</accession>
<feature type="chain" id="PRO_0000332692" description="Transcriptional repressor RcnR">
    <location>
        <begin position="1"/>
        <end position="90"/>
    </location>
</feature>
<protein>
    <recommendedName>
        <fullName>Transcriptional repressor RcnR</fullName>
    </recommendedName>
</protein>
<organism>
    <name type="scientific">Citrobacter koseri (strain ATCC BAA-895 / CDC 4225-83 / SGSC4696)</name>
    <dbReference type="NCBI Taxonomy" id="290338"/>
    <lineage>
        <taxon>Bacteria</taxon>
        <taxon>Pseudomonadati</taxon>
        <taxon>Pseudomonadota</taxon>
        <taxon>Gammaproteobacteria</taxon>
        <taxon>Enterobacterales</taxon>
        <taxon>Enterobacteriaceae</taxon>
        <taxon>Citrobacter</taxon>
    </lineage>
</organism>
<name>RCNR_CITK8</name>
<comment type="function">
    <text evidence="1">Repressor of rcnA expression. Acts by binding specifically to the rcnA promoter in the absence of nickel and cobalt. In the presence of one of these metals, it has a weaker affinity for rcnA promoter (By similarity).</text>
</comment>
<comment type="subcellular location">
    <subcellularLocation>
        <location evidence="2">Cytoplasm</location>
    </subcellularLocation>
</comment>
<comment type="similarity">
    <text evidence="2">Belongs to the FrmR/RcnR family.</text>
</comment>
<dbReference type="EMBL" id="CP000822">
    <property type="protein sequence ID" value="ABV15288.1"/>
    <property type="molecule type" value="Genomic_DNA"/>
</dbReference>
<dbReference type="RefSeq" id="WP_012134972.1">
    <property type="nucleotide sequence ID" value="NC_009792.1"/>
</dbReference>
<dbReference type="SMR" id="A8AP75"/>
<dbReference type="STRING" id="290338.CKO_04229"/>
<dbReference type="GeneID" id="45137839"/>
<dbReference type="KEGG" id="cko:CKO_04229"/>
<dbReference type="HOGENOM" id="CLU_130332_3_0_6"/>
<dbReference type="OrthoDB" id="9806052at2"/>
<dbReference type="Proteomes" id="UP000008148">
    <property type="component" value="Chromosome"/>
</dbReference>
<dbReference type="GO" id="GO:0005737">
    <property type="term" value="C:cytoplasm"/>
    <property type="evidence" value="ECO:0007669"/>
    <property type="project" value="UniProtKB-SubCell"/>
</dbReference>
<dbReference type="GO" id="GO:0003677">
    <property type="term" value="F:DNA binding"/>
    <property type="evidence" value="ECO:0007669"/>
    <property type="project" value="UniProtKB-KW"/>
</dbReference>
<dbReference type="GO" id="GO:0046872">
    <property type="term" value="F:metal ion binding"/>
    <property type="evidence" value="ECO:0007669"/>
    <property type="project" value="InterPro"/>
</dbReference>
<dbReference type="GO" id="GO:0045892">
    <property type="term" value="P:negative regulation of DNA-templated transcription"/>
    <property type="evidence" value="ECO:0007669"/>
    <property type="project" value="UniProtKB-ARBA"/>
</dbReference>
<dbReference type="CDD" id="cd10153">
    <property type="entry name" value="RcnR-FrmR-like_DUF156"/>
    <property type="match status" value="1"/>
</dbReference>
<dbReference type="FunFam" id="1.20.58.1000:FF:000001">
    <property type="entry name" value="Transcriptional repressor RcnR"/>
    <property type="match status" value="1"/>
</dbReference>
<dbReference type="Gene3D" id="1.20.58.1000">
    <property type="entry name" value="Metal-sensitive repressor, helix protomer"/>
    <property type="match status" value="1"/>
</dbReference>
<dbReference type="InterPro" id="IPR003735">
    <property type="entry name" value="Metal_Tscrpt_repr"/>
</dbReference>
<dbReference type="InterPro" id="IPR038390">
    <property type="entry name" value="Metal_Tscrpt_repr_sf"/>
</dbReference>
<dbReference type="NCBIfam" id="NF011613">
    <property type="entry name" value="PRK15039.1"/>
    <property type="match status" value="1"/>
</dbReference>
<dbReference type="PANTHER" id="PTHR33677">
    <property type="entry name" value="TRANSCRIPTIONAL REPRESSOR FRMR-RELATED"/>
    <property type="match status" value="1"/>
</dbReference>
<dbReference type="PANTHER" id="PTHR33677:SF1">
    <property type="entry name" value="TRANSCRIPTIONAL REPRESSOR RCNR"/>
    <property type="match status" value="1"/>
</dbReference>
<dbReference type="Pfam" id="PF02583">
    <property type="entry name" value="Trns_repr_metal"/>
    <property type="match status" value="1"/>
</dbReference>
<keyword id="KW-0963">Cytoplasm</keyword>
<keyword id="KW-0238">DNA-binding</keyword>
<keyword id="KW-1185">Reference proteome</keyword>
<keyword id="KW-0678">Repressor</keyword>
<keyword id="KW-0804">Transcription</keyword>
<keyword id="KW-0805">Transcription regulation</keyword>
<proteinExistence type="inferred from homology"/>
<evidence type="ECO:0000250" key="1"/>
<evidence type="ECO:0000305" key="2"/>